<protein>
    <recommendedName>
        <fullName evidence="1">Cytidylate kinase</fullName>
        <shortName evidence="1">CK</shortName>
        <ecNumber evidence="1">2.7.4.25</ecNumber>
    </recommendedName>
    <alternativeName>
        <fullName evidence="1">Cytidine monophosphate kinase</fullName>
        <shortName evidence="1">CMP kinase</shortName>
    </alternativeName>
</protein>
<accession>C6E2B2</accession>
<organism>
    <name type="scientific">Geobacter sp. (strain M21)</name>
    <dbReference type="NCBI Taxonomy" id="443144"/>
    <lineage>
        <taxon>Bacteria</taxon>
        <taxon>Pseudomonadati</taxon>
        <taxon>Thermodesulfobacteriota</taxon>
        <taxon>Desulfuromonadia</taxon>
        <taxon>Geobacterales</taxon>
        <taxon>Geobacteraceae</taxon>
        <taxon>Geobacter</taxon>
    </lineage>
</organism>
<evidence type="ECO:0000255" key="1">
    <source>
        <dbReference type="HAMAP-Rule" id="MF_00238"/>
    </source>
</evidence>
<evidence type="ECO:0000256" key="2">
    <source>
        <dbReference type="SAM" id="MobiDB-lite"/>
    </source>
</evidence>
<reference key="1">
    <citation type="submission" date="2009-07" db="EMBL/GenBank/DDBJ databases">
        <title>Complete sequence of Geobacter sp. M21.</title>
        <authorList>
            <consortium name="US DOE Joint Genome Institute"/>
            <person name="Lucas S."/>
            <person name="Copeland A."/>
            <person name="Lapidus A."/>
            <person name="Glavina del Rio T."/>
            <person name="Dalin E."/>
            <person name="Tice H."/>
            <person name="Bruce D."/>
            <person name="Goodwin L."/>
            <person name="Pitluck S."/>
            <person name="Saunders E."/>
            <person name="Brettin T."/>
            <person name="Detter J.C."/>
            <person name="Han C."/>
            <person name="Larimer F."/>
            <person name="Land M."/>
            <person name="Hauser L."/>
            <person name="Kyrpides N."/>
            <person name="Ovchinnikova G."/>
            <person name="Lovley D."/>
        </authorList>
    </citation>
    <scope>NUCLEOTIDE SEQUENCE [LARGE SCALE GENOMIC DNA]</scope>
    <source>
        <strain>M21</strain>
    </source>
</reference>
<proteinExistence type="inferred from homology"/>
<gene>
    <name evidence="1" type="primary">cmk</name>
    <name type="ordered locus">GM21_0993</name>
</gene>
<dbReference type="EC" id="2.7.4.25" evidence="1"/>
<dbReference type="EMBL" id="CP001661">
    <property type="protein sequence ID" value="ACT17058.1"/>
    <property type="molecule type" value="Genomic_DNA"/>
</dbReference>
<dbReference type="SMR" id="C6E2B2"/>
<dbReference type="STRING" id="443144.GM21_0993"/>
<dbReference type="KEGG" id="gem:GM21_0993"/>
<dbReference type="eggNOG" id="COG0283">
    <property type="taxonomic scope" value="Bacteria"/>
</dbReference>
<dbReference type="HOGENOM" id="CLU_079959_0_2_7"/>
<dbReference type="OrthoDB" id="9807434at2"/>
<dbReference type="GO" id="GO:0005829">
    <property type="term" value="C:cytosol"/>
    <property type="evidence" value="ECO:0007669"/>
    <property type="project" value="TreeGrafter"/>
</dbReference>
<dbReference type="GO" id="GO:0005524">
    <property type="term" value="F:ATP binding"/>
    <property type="evidence" value="ECO:0007669"/>
    <property type="project" value="UniProtKB-UniRule"/>
</dbReference>
<dbReference type="GO" id="GO:0036430">
    <property type="term" value="F:CMP kinase activity"/>
    <property type="evidence" value="ECO:0007669"/>
    <property type="project" value="RHEA"/>
</dbReference>
<dbReference type="GO" id="GO:0036431">
    <property type="term" value="F:dCMP kinase activity"/>
    <property type="evidence" value="ECO:0007669"/>
    <property type="project" value="RHEA"/>
</dbReference>
<dbReference type="GO" id="GO:0015949">
    <property type="term" value="P:nucleobase-containing small molecule interconversion"/>
    <property type="evidence" value="ECO:0007669"/>
    <property type="project" value="TreeGrafter"/>
</dbReference>
<dbReference type="GO" id="GO:0006220">
    <property type="term" value="P:pyrimidine nucleotide metabolic process"/>
    <property type="evidence" value="ECO:0007669"/>
    <property type="project" value="UniProtKB-UniRule"/>
</dbReference>
<dbReference type="CDD" id="cd02020">
    <property type="entry name" value="CMPK"/>
    <property type="match status" value="1"/>
</dbReference>
<dbReference type="Gene3D" id="3.40.50.300">
    <property type="entry name" value="P-loop containing nucleotide triphosphate hydrolases"/>
    <property type="match status" value="1"/>
</dbReference>
<dbReference type="HAMAP" id="MF_00238">
    <property type="entry name" value="Cytidyl_kinase_type1"/>
    <property type="match status" value="1"/>
</dbReference>
<dbReference type="InterPro" id="IPR003136">
    <property type="entry name" value="Cytidylate_kin"/>
</dbReference>
<dbReference type="InterPro" id="IPR011994">
    <property type="entry name" value="Cytidylate_kinase_dom"/>
</dbReference>
<dbReference type="InterPro" id="IPR027417">
    <property type="entry name" value="P-loop_NTPase"/>
</dbReference>
<dbReference type="NCBIfam" id="TIGR00017">
    <property type="entry name" value="cmk"/>
    <property type="match status" value="1"/>
</dbReference>
<dbReference type="PANTHER" id="PTHR21299:SF2">
    <property type="entry name" value="CYTIDYLATE KINASE"/>
    <property type="match status" value="1"/>
</dbReference>
<dbReference type="PANTHER" id="PTHR21299">
    <property type="entry name" value="CYTIDYLATE KINASE/PANTOATE-BETA-ALANINE LIGASE"/>
    <property type="match status" value="1"/>
</dbReference>
<dbReference type="Pfam" id="PF02224">
    <property type="entry name" value="Cytidylate_kin"/>
    <property type="match status" value="1"/>
</dbReference>
<dbReference type="SUPFAM" id="SSF52540">
    <property type="entry name" value="P-loop containing nucleoside triphosphate hydrolases"/>
    <property type="match status" value="1"/>
</dbReference>
<feature type="chain" id="PRO_1000204451" description="Cytidylate kinase">
    <location>
        <begin position="1"/>
        <end position="233"/>
    </location>
</feature>
<feature type="region of interest" description="Disordered" evidence="2">
    <location>
        <begin position="183"/>
        <end position="203"/>
    </location>
</feature>
<feature type="compositionally biased region" description="Basic and acidic residues" evidence="2">
    <location>
        <begin position="183"/>
        <end position="200"/>
    </location>
</feature>
<feature type="binding site" evidence="1">
    <location>
        <begin position="15"/>
        <end position="23"/>
    </location>
    <ligand>
        <name>ATP</name>
        <dbReference type="ChEBI" id="CHEBI:30616"/>
    </ligand>
</feature>
<sequence>MSVVRENGVIVAIDGPSGAGKSSLTKLLAKRLGYIHIDTGAMFRAVALSAQRAGIASDDDAGLAELCRGLDITFARDGEACRVLANGEDVSREIRTEEIGLLTSTVSARQPVRQALLEMQRKMGAKGGVILEGRDIGTVVFPDAEVKFFLSASAEERGRRRYLELAARGESATLEETIAKVVQRDRQDEGREHAPLKQAEDAVPIDSTSLTIEEVLELMERTVKERLAQGDKG</sequence>
<comment type="catalytic activity">
    <reaction evidence="1">
        <text>CMP + ATP = CDP + ADP</text>
        <dbReference type="Rhea" id="RHEA:11600"/>
        <dbReference type="ChEBI" id="CHEBI:30616"/>
        <dbReference type="ChEBI" id="CHEBI:58069"/>
        <dbReference type="ChEBI" id="CHEBI:60377"/>
        <dbReference type="ChEBI" id="CHEBI:456216"/>
        <dbReference type="EC" id="2.7.4.25"/>
    </reaction>
</comment>
<comment type="catalytic activity">
    <reaction evidence="1">
        <text>dCMP + ATP = dCDP + ADP</text>
        <dbReference type="Rhea" id="RHEA:25094"/>
        <dbReference type="ChEBI" id="CHEBI:30616"/>
        <dbReference type="ChEBI" id="CHEBI:57566"/>
        <dbReference type="ChEBI" id="CHEBI:58593"/>
        <dbReference type="ChEBI" id="CHEBI:456216"/>
        <dbReference type="EC" id="2.7.4.25"/>
    </reaction>
</comment>
<comment type="subcellular location">
    <subcellularLocation>
        <location evidence="1">Cytoplasm</location>
    </subcellularLocation>
</comment>
<comment type="similarity">
    <text evidence="1">Belongs to the cytidylate kinase family. Type 1 subfamily.</text>
</comment>
<name>KCY_GEOSM</name>
<keyword id="KW-0067">ATP-binding</keyword>
<keyword id="KW-0963">Cytoplasm</keyword>
<keyword id="KW-0418">Kinase</keyword>
<keyword id="KW-0547">Nucleotide-binding</keyword>
<keyword id="KW-0808">Transferase</keyword>